<proteinExistence type="inferred from homology"/>
<reference key="1">
    <citation type="journal article" date="2010" name="Genome Biol. Evol.">
        <title>Continuing evolution of Burkholderia mallei through genome reduction and large-scale rearrangements.</title>
        <authorList>
            <person name="Losada L."/>
            <person name="Ronning C.M."/>
            <person name="DeShazer D."/>
            <person name="Woods D."/>
            <person name="Fedorova N."/>
            <person name="Kim H.S."/>
            <person name="Shabalina S.A."/>
            <person name="Pearson T.R."/>
            <person name="Brinkac L."/>
            <person name="Tan P."/>
            <person name="Nandi T."/>
            <person name="Crabtree J."/>
            <person name="Badger J."/>
            <person name="Beckstrom-Sternberg S."/>
            <person name="Saqib M."/>
            <person name="Schutzer S.E."/>
            <person name="Keim P."/>
            <person name="Nierman W.C."/>
        </authorList>
    </citation>
    <scope>NUCLEOTIDE SEQUENCE [LARGE SCALE GENOMIC DNA]</scope>
    <source>
        <strain>NCTC 10247</strain>
    </source>
</reference>
<keyword id="KW-0687">Ribonucleoprotein</keyword>
<keyword id="KW-0689">Ribosomal protein</keyword>
<comment type="similarity">
    <text evidence="1">Belongs to the bacterial ribosomal protein bL33 family.</text>
</comment>
<feature type="chain" id="PRO_1000115108" description="Large ribosomal subunit protein bL33">
    <location>
        <begin position="1"/>
        <end position="55"/>
    </location>
</feature>
<feature type="region of interest" description="Disordered" evidence="2">
    <location>
        <begin position="1"/>
        <end position="24"/>
    </location>
</feature>
<feature type="compositionally biased region" description="Basic and acidic residues" evidence="2">
    <location>
        <begin position="1"/>
        <end position="11"/>
    </location>
</feature>
<feature type="compositionally biased region" description="Polar residues" evidence="2">
    <location>
        <begin position="14"/>
        <end position="24"/>
    </location>
</feature>
<organism>
    <name type="scientific">Burkholderia mallei (strain NCTC 10247)</name>
    <dbReference type="NCBI Taxonomy" id="320389"/>
    <lineage>
        <taxon>Bacteria</taxon>
        <taxon>Pseudomonadati</taxon>
        <taxon>Pseudomonadota</taxon>
        <taxon>Betaproteobacteria</taxon>
        <taxon>Burkholderiales</taxon>
        <taxon>Burkholderiaceae</taxon>
        <taxon>Burkholderia</taxon>
        <taxon>pseudomallei group</taxon>
    </lineage>
</organism>
<protein>
    <recommendedName>
        <fullName evidence="1">Large ribosomal subunit protein bL33</fullName>
    </recommendedName>
    <alternativeName>
        <fullName evidence="3">50S ribosomal protein L33</fullName>
    </alternativeName>
</protein>
<name>RL33_BURM7</name>
<gene>
    <name evidence="1" type="primary">rpmG</name>
    <name type="ordered locus">BMA10247_2101</name>
</gene>
<accession>A3MMZ6</accession>
<evidence type="ECO:0000255" key="1">
    <source>
        <dbReference type="HAMAP-Rule" id="MF_00294"/>
    </source>
</evidence>
<evidence type="ECO:0000256" key="2">
    <source>
        <dbReference type="SAM" id="MobiDB-lite"/>
    </source>
</evidence>
<evidence type="ECO:0000305" key="3"/>
<dbReference type="EMBL" id="CP000548">
    <property type="protein sequence ID" value="ABO04977.1"/>
    <property type="molecule type" value="Genomic_DNA"/>
</dbReference>
<dbReference type="RefSeq" id="WP_004185395.1">
    <property type="nucleotide sequence ID" value="NZ_CP007802.1"/>
</dbReference>
<dbReference type="SMR" id="A3MMZ6"/>
<dbReference type="GeneID" id="95550920"/>
<dbReference type="KEGG" id="bmaz:BM44_1126"/>
<dbReference type="KEGG" id="bmn:BMA10247_2101"/>
<dbReference type="PATRIC" id="fig|320389.8.peg.1260"/>
<dbReference type="GO" id="GO:0022625">
    <property type="term" value="C:cytosolic large ribosomal subunit"/>
    <property type="evidence" value="ECO:0007669"/>
    <property type="project" value="TreeGrafter"/>
</dbReference>
<dbReference type="GO" id="GO:0003735">
    <property type="term" value="F:structural constituent of ribosome"/>
    <property type="evidence" value="ECO:0007669"/>
    <property type="project" value="InterPro"/>
</dbReference>
<dbReference type="GO" id="GO:0006412">
    <property type="term" value="P:translation"/>
    <property type="evidence" value="ECO:0007669"/>
    <property type="project" value="UniProtKB-UniRule"/>
</dbReference>
<dbReference type="FunFam" id="2.20.28.120:FF:000001">
    <property type="entry name" value="50S ribosomal protein L33"/>
    <property type="match status" value="1"/>
</dbReference>
<dbReference type="Gene3D" id="2.20.28.120">
    <property type="entry name" value="Ribosomal protein L33"/>
    <property type="match status" value="1"/>
</dbReference>
<dbReference type="HAMAP" id="MF_00294">
    <property type="entry name" value="Ribosomal_bL33"/>
    <property type="match status" value="1"/>
</dbReference>
<dbReference type="InterPro" id="IPR001705">
    <property type="entry name" value="Ribosomal_bL33"/>
</dbReference>
<dbReference type="InterPro" id="IPR018264">
    <property type="entry name" value="Ribosomal_bL33_CS"/>
</dbReference>
<dbReference type="InterPro" id="IPR038584">
    <property type="entry name" value="Ribosomal_bL33_sf"/>
</dbReference>
<dbReference type="InterPro" id="IPR011332">
    <property type="entry name" value="Ribosomal_zn-bd"/>
</dbReference>
<dbReference type="NCBIfam" id="NF001860">
    <property type="entry name" value="PRK00595.1"/>
    <property type="match status" value="1"/>
</dbReference>
<dbReference type="NCBIfam" id="TIGR01023">
    <property type="entry name" value="rpmG_bact"/>
    <property type="match status" value="1"/>
</dbReference>
<dbReference type="PANTHER" id="PTHR15238">
    <property type="entry name" value="54S RIBOSOMAL PROTEIN L39, MITOCHONDRIAL"/>
    <property type="match status" value="1"/>
</dbReference>
<dbReference type="PANTHER" id="PTHR15238:SF1">
    <property type="entry name" value="LARGE RIBOSOMAL SUBUNIT PROTEIN BL33M"/>
    <property type="match status" value="1"/>
</dbReference>
<dbReference type="Pfam" id="PF00471">
    <property type="entry name" value="Ribosomal_L33"/>
    <property type="match status" value="1"/>
</dbReference>
<dbReference type="SUPFAM" id="SSF57829">
    <property type="entry name" value="Zn-binding ribosomal proteins"/>
    <property type="match status" value="1"/>
</dbReference>
<dbReference type="PROSITE" id="PS00582">
    <property type="entry name" value="RIBOSOMAL_L33"/>
    <property type="match status" value="1"/>
</dbReference>
<sequence length="55" mass="6356">MAKGARDKIKLESTAGTGHFYTTTKNKRNMPEKMEIMKFDPVARKHVAYKETKIK</sequence>